<sequence length="134" mass="15192">MSRDTIAEVLTVIRNANMDGKKTVKIPSSNITENIIKLLLREGFLENVRKHYENGNYFLVLTLRHQKTKKGTFTNILNLKKISRPGRRIYSTSKKIPRILGGIGIVILSTSHGILTDREARLEGIGGEILCYIW</sequence>
<keyword id="KW-0934">Plastid</keyword>
<keyword id="KW-0687">Ribonucleoprotein</keyword>
<keyword id="KW-0689">Ribosomal protein</keyword>
<keyword id="KW-0694">RNA-binding</keyword>
<keyword id="KW-0699">rRNA-binding</keyword>
<protein>
    <recommendedName>
        <fullName evidence="2">Small ribosomal subunit protein uS8c</fullName>
    </recommendedName>
    <alternativeName>
        <fullName>30S ribosomal protein S8, plastid</fullName>
    </alternativeName>
</protein>
<organism>
    <name type="scientific">Cuscuta obtusiflora</name>
    <name type="common">Peruvian dodder</name>
    <dbReference type="NCBI Taxonomy" id="437280"/>
    <lineage>
        <taxon>Eukaryota</taxon>
        <taxon>Viridiplantae</taxon>
        <taxon>Streptophyta</taxon>
        <taxon>Embryophyta</taxon>
        <taxon>Tracheophyta</taxon>
        <taxon>Spermatophyta</taxon>
        <taxon>Magnoliopsida</taxon>
        <taxon>eudicotyledons</taxon>
        <taxon>Gunneridae</taxon>
        <taxon>Pentapetalae</taxon>
        <taxon>asterids</taxon>
        <taxon>lamiids</taxon>
        <taxon>Solanales</taxon>
        <taxon>Convolvulaceae</taxon>
        <taxon>Cuscuteae</taxon>
        <taxon>Cuscuta</taxon>
        <taxon>Cuscuta subgen. Grammica</taxon>
        <taxon>Cuscuta sect. Cleistogrammica</taxon>
    </lineage>
</organism>
<name>RR8_CUSOB</name>
<proteinExistence type="inferred from homology"/>
<feature type="chain" id="PRO_0000322028" description="Small ribosomal subunit protein uS8c">
    <location>
        <begin position="1"/>
        <end position="134"/>
    </location>
</feature>
<comment type="function">
    <text evidence="1">One of the primary rRNA binding proteins, it binds directly to 16S rRNA central domain where it helps coordinate assembly of the platform of the 30S subunit.</text>
</comment>
<comment type="subunit">
    <text evidence="1">Part of the 30S ribosomal subunit.</text>
</comment>
<comment type="subcellular location">
    <subcellularLocation>
        <location>Plastid</location>
    </subcellularLocation>
</comment>
<comment type="similarity">
    <text evidence="2">Belongs to the universal ribosomal protein uS8 family.</text>
</comment>
<accession>A8W3L7</accession>
<reference key="1">
    <citation type="journal article" date="2007" name="BMC Plant Biol.">
        <title>Complete plastid genome sequences suggest strong selection for retention of photosynthetic genes in the parasitic plant genus Cuscuta.</title>
        <authorList>
            <person name="McNeal J.R."/>
            <person name="Kuehl J.V."/>
            <person name="Boore J.L."/>
            <person name="dePamphilis C.W."/>
        </authorList>
    </citation>
    <scope>NUCLEOTIDE SEQUENCE [LARGE SCALE GENOMIC DNA]</scope>
</reference>
<gene>
    <name type="primary">rps8</name>
</gene>
<dbReference type="EMBL" id="EU189133">
    <property type="protein sequence ID" value="ABW20592.1"/>
    <property type="molecule type" value="Genomic_DNA"/>
</dbReference>
<dbReference type="RefSeq" id="YP_001531247.1">
    <property type="nucleotide sequence ID" value="NC_009949.1"/>
</dbReference>
<dbReference type="SMR" id="A8W3L7"/>
<dbReference type="GeneID" id="5714792"/>
<dbReference type="GO" id="GO:0009536">
    <property type="term" value="C:plastid"/>
    <property type="evidence" value="ECO:0007669"/>
    <property type="project" value="UniProtKB-SubCell"/>
</dbReference>
<dbReference type="GO" id="GO:1990904">
    <property type="term" value="C:ribonucleoprotein complex"/>
    <property type="evidence" value="ECO:0007669"/>
    <property type="project" value="UniProtKB-KW"/>
</dbReference>
<dbReference type="GO" id="GO:0005840">
    <property type="term" value="C:ribosome"/>
    <property type="evidence" value="ECO:0007669"/>
    <property type="project" value="UniProtKB-KW"/>
</dbReference>
<dbReference type="GO" id="GO:0019843">
    <property type="term" value="F:rRNA binding"/>
    <property type="evidence" value="ECO:0007669"/>
    <property type="project" value="UniProtKB-KW"/>
</dbReference>
<dbReference type="GO" id="GO:0003735">
    <property type="term" value="F:structural constituent of ribosome"/>
    <property type="evidence" value="ECO:0007669"/>
    <property type="project" value="InterPro"/>
</dbReference>
<dbReference type="GO" id="GO:0006412">
    <property type="term" value="P:translation"/>
    <property type="evidence" value="ECO:0007669"/>
    <property type="project" value="InterPro"/>
</dbReference>
<dbReference type="FunFam" id="3.30.1490.10:FF:000001">
    <property type="entry name" value="30S ribosomal protein S8"/>
    <property type="match status" value="1"/>
</dbReference>
<dbReference type="Gene3D" id="3.30.1370.30">
    <property type="match status" value="1"/>
</dbReference>
<dbReference type="Gene3D" id="3.30.1490.10">
    <property type="match status" value="1"/>
</dbReference>
<dbReference type="HAMAP" id="MF_01302_B">
    <property type="entry name" value="Ribosomal_uS8_B"/>
    <property type="match status" value="1"/>
</dbReference>
<dbReference type="InterPro" id="IPR000630">
    <property type="entry name" value="Ribosomal_uS8"/>
</dbReference>
<dbReference type="InterPro" id="IPR047863">
    <property type="entry name" value="Ribosomal_uS8_CS"/>
</dbReference>
<dbReference type="InterPro" id="IPR035987">
    <property type="entry name" value="Ribosomal_uS8_sf"/>
</dbReference>
<dbReference type="NCBIfam" id="NF001109">
    <property type="entry name" value="PRK00136.1"/>
    <property type="match status" value="1"/>
</dbReference>
<dbReference type="PANTHER" id="PTHR11758">
    <property type="entry name" value="40S RIBOSOMAL PROTEIN S15A"/>
    <property type="match status" value="1"/>
</dbReference>
<dbReference type="Pfam" id="PF00410">
    <property type="entry name" value="Ribosomal_S8"/>
    <property type="match status" value="1"/>
</dbReference>
<dbReference type="SUPFAM" id="SSF56047">
    <property type="entry name" value="Ribosomal protein S8"/>
    <property type="match status" value="1"/>
</dbReference>
<dbReference type="PROSITE" id="PS00053">
    <property type="entry name" value="RIBOSOMAL_S8"/>
    <property type="match status" value="1"/>
</dbReference>
<evidence type="ECO:0000250" key="1"/>
<evidence type="ECO:0000305" key="2"/>
<geneLocation type="plastid"/>